<evidence type="ECO:0000255" key="1">
    <source>
        <dbReference type="HAMAP-Rule" id="MF_01864"/>
    </source>
</evidence>
<evidence type="ECO:0000255" key="2">
    <source>
        <dbReference type="PROSITE-ProRule" id="PRU01266"/>
    </source>
</evidence>
<evidence type="ECO:0000256" key="3">
    <source>
        <dbReference type="SAM" id="MobiDB-lite"/>
    </source>
</evidence>
<organism>
    <name type="scientific">Rhizobium johnstonii (strain DSM 114642 / LMG 32736 / 3841)</name>
    <name type="common">Rhizobium leguminosarum bv. viciae</name>
    <dbReference type="NCBI Taxonomy" id="216596"/>
    <lineage>
        <taxon>Bacteria</taxon>
        <taxon>Pseudomonadati</taxon>
        <taxon>Pseudomonadota</taxon>
        <taxon>Alphaproteobacteria</taxon>
        <taxon>Hyphomicrobiales</taxon>
        <taxon>Rhizobiaceae</taxon>
        <taxon>Rhizobium/Agrobacterium group</taxon>
        <taxon>Rhizobium</taxon>
        <taxon>Rhizobium johnstonii</taxon>
    </lineage>
</organism>
<gene>
    <name evidence="1" type="primary">miaB</name>
    <name type="ordered locus">RL0395</name>
</gene>
<name>MIAB_RHIJ3</name>
<dbReference type="EC" id="2.8.4.3" evidence="1"/>
<dbReference type="EMBL" id="AM236080">
    <property type="protein sequence ID" value="CAK05886.1"/>
    <property type="molecule type" value="Genomic_DNA"/>
</dbReference>
<dbReference type="RefSeq" id="WP_011650191.1">
    <property type="nucleotide sequence ID" value="NC_008380.1"/>
</dbReference>
<dbReference type="SMR" id="Q1MMB6"/>
<dbReference type="EnsemblBacteria" id="CAK05886">
    <property type="protein sequence ID" value="CAK05886"/>
    <property type="gene ID" value="RL0395"/>
</dbReference>
<dbReference type="KEGG" id="rle:RL0395"/>
<dbReference type="eggNOG" id="COG0621">
    <property type="taxonomic scope" value="Bacteria"/>
</dbReference>
<dbReference type="HOGENOM" id="CLU_018697_2_2_5"/>
<dbReference type="Proteomes" id="UP000006575">
    <property type="component" value="Chromosome"/>
</dbReference>
<dbReference type="GO" id="GO:0005829">
    <property type="term" value="C:cytosol"/>
    <property type="evidence" value="ECO:0007669"/>
    <property type="project" value="TreeGrafter"/>
</dbReference>
<dbReference type="GO" id="GO:0051539">
    <property type="term" value="F:4 iron, 4 sulfur cluster binding"/>
    <property type="evidence" value="ECO:0007669"/>
    <property type="project" value="UniProtKB-UniRule"/>
</dbReference>
<dbReference type="GO" id="GO:0046872">
    <property type="term" value="F:metal ion binding"/>
    <property type="evidence" value="ECO:0007669"/>
    <property type="project" value="UniProtKB-KW"/>
</dbReference>
<dbReference type="GO" id="GO:0035597">
    <property type="term" value="F:N6-isopentenyladenosine methylthiotransferase activity"/>
    <property type="evidence" value="ECO:0007669"/>
    <property type="project" value="TreeGrafter"/>
</dbReference>
<dbReference type="CDD" id="cd01335">
    <property type="entry name" value="Radical_SAM"/>
    <property type="match status" value="1"/>
</dbReference>
<dbReference type="FunFam" id="3.40.50.12160:FF:000001">
    <property type="entry name" value="tRNA-2-methylthio-N(6)-dimethylallyladenosine synthase"/>
    <property type="match status" value="1"/>
</dbReference>
<dbReference type="FunFam" id="3.80.30.20:FF:000001">
    <property type="entry name" value="tRNA-2-methylthio-N(6)-dimethylallyladenosine synthase 2"/>
    <property type="match status" value="1"/>
</dbReference>
<dbReference type="Gene3D" id="3.40.50.12160">
    <property type="entry name" value="Methylthiotransferase, N-terminal domain"/>
    <property type="match status" value="1"/>
</dbReference>
<dbReference type="Gene3D" id="3.80.30.20">
    <property type="entry name" value="tm_1862 like domain"/>
    <property type="match status" value="1"/>
</dbReference>
<dbReference type="HAMAP" id="MF_01864">
    <property type="entry name" value="tRNA_metthiotr_MiaB"/>
    <property type="match status" value="1"/>
</dbReference>
<dbReference type="InterPro" id="IPR006638">
    <property type="entry name" value="Elp3/MiaA/NifB-like_rSAM"/>
</dbReference>
<dbReference type="InterPro" id="IPR005839">
    <property type="entry name" value="Methylthiotransferase"/>
</dbReference>
<dbReference type="InterPro" id="IPR020612">
    <property type="entry name" value="Methylthiotransferase_CS"/>
</dbReference>
<dbReference type="InterPro" id="IPR013848">
    <property type="entry name" value="Methylthiotransferase_N"/>
</dbReference>
<dbReference type="InterPro" id="IPR038135">
    <property type="entry name" value="Methylthiotransferase_N_sf"/>
</dbReference>
<dbReference type="InterPro" id="IPR006463">
    <property type="entry name" value="MiaB_methiolase"/>
</dbReference>
<dbReference type="InterPro" id="IPR007197">
    <property type="entry name" value="rSAM"/>
</dbReference>
<dbReference type="InterPro" id="IPR023404">
    <property type="entry name" value="rSAM_horseshoe"/>
</dbReference>
<dbReference type="InterPro" id="IPR002792">
    <property type="entry name" value="TRAM_dom"/>
</dbReference>
<dbReference type="NCBIfam" id="TIGR01574">
    <property type="entry name" value="miaB-methiolase"/>
    <property type="match status" value="1"/>
</dbReference>
<dbReference type="NCBIfam" id="TIGR00089">
    <property type="entry name" value="MiaB/RimO family radical SAM methylthiotransferase"/>
    <property type="match status" value="1"/>
</dbReference>
<dbReference type="PANTHER" id="PTHR43020">
    <property type="entry name" value="CDK5 REGULATORY SUBUNIT-ASSOCIATED PROTEIN 1"/>
    <property type="match status" value="1"/>
</dbReference>
<dbReference type="PANTHER" id="PTHR43020:SF2">
    <property type="entry name" value="MITOCHONDRIAL TRNA METHYLTHIOTRANSFERASE CDK5RAP1"/>
    <property type="match status" value="1"/>
</dbReference>
<dbReference type="Pfam" id="PF04055">
    <property type="entry name" value="Radical_SAM"/>
    <property type="match status" value="1"/>
</dbReference>
<dbReference type="Pfam" id="PF01938">
    <property type="entry name" value="TRAM"/>
    <property type="match status" value="1"/>
</dbReference>
<dbReference type="Pfam" id="PF00919">
    <property type="entry name" value="UPF0004"/>
    <property type="match status" value="1"/>
</dbReference>
<dbReference type="SFLD" id="SFLDF00273">
    <property type="entry name" value="(dimethylallyl)adenosine_tRNA"/>
    <property type="match status" value="1"/>
</dbReference>
<dbReference type="SFLD" id="SFLDG01082">
    <property type="entry name" value="B12-binding_domain_containing"/>
    <property type="match status" value="1"/>
</dbReference>
<dbReference type="SFLD" id="SFLDG01061">
    <property type="entry name" value="methylthiotransferase"/>
    <property type="match status" value="1"/>
</dbReference>
<dbReference type="SMART" id="SM00729">
    <property type="entry name" value="Elp3"/>
    <property type="match status" value="1"/>
</dbReference>
<dbReference type="SUPFAM" id="SSF102114">
    <property type="entry name" value="Radical SAM enzymes"/>
    <property type="match status" value="1"/>
</dbReference>
<dbReference type="PROSITE" id="PS51449">
    <property type="entry name" value="MTTASE_N"/>
    <property type="match status" value="1"/>
</dbReference>
<dbReference type="PROSITE" id="PS01278">
    <property type="entry name" value="MTTASE_RADICAL"/>
    <property type="match status" value="1"/>
</dbReference>
<dbReference type="PROSITE" id="PS51918">
    <property type="entry name" value="RADICAL_SAM"/>
    <property type="match status" value="1"/>
</dbReference>
<dbReference type="PROSITE" id="PS50926">
    <property type="entry name" value="TRAM"/>
    <property type="match status" value="1"/>
</dbReference>
<proteinExistence type="inferred from homology"/>
<comment type="function">
    <text evidence="1">Catalyzes the methylthiolation of N6-(dimethylallyl)adenosine (i(6)A), leading to the formation of 2-methylthio-N6-(dimethylallyl)adenosine (ms(2)i(6)A) at position 37 in tRNAs that read codons beginning with uridine.</text>
</comment>
<comment type="catalytic activity">
    <reaction evidence="1">
        <text>N(6)-dimethylallyladenosine(37) in tRNA + (sulfur carrier)-SH + AH2 + 2 S-adenosyl-L-methionine = 2-methylsulfanyl-N(6)-dimethylallyladenosine(37) in tRNA + (sulfur carrier)-H + 5'-deoxyadenosine + L-methionine + A + S-adenosyl-L-homocysteine + 2 H(+)</text>
        <dbReference type="Rhea" id="RHEA:37067"/>
        <dbReference type="Rhea" id="RHEA-COMP:10375"/>
        <dbReference type="Rhea" id="RHEA-COMP:10376"/>
        <dbReference type="Rhea" id="RHEA-COMP:14737"/>
        <dbReference type="Rhea" id="RHEA-COMP:14739"/>
        <dbReference type="ChEBI" id="CHEBI:13193"/>
        <dbReference type="ChEBI" id="CHEBI:15378"/>
        <dbReference type="ChEBI" id="CHEBI:17319"/>
        <dbReference type="ChEBI" id="CHEBI:17499"/>
        <dbReference type="ChEBI" id="CHEBI:29917"/>
        <dbReference type="ChEBI" id="CHEBI:57844"/>
        <dbReference type="ChEBI" id="CHEBI:57856"/>
        <dbReference type="ChEBI" id="CHEBI:59789"/>
        <dbReference type="ChEBI" id="CHEBI:64428"/>
        <dbReference type="ChEBI" id="CHEBI:74415"/>
        <dbReference type="ChEBI" id="CHEBI:74417"/>
        <dbReference type="EC" id="2.8.4.3"/>
    </reaction>
</comment>
<comment type="cofactor">
    <cofactor evidence="1">
        <name>[4Fe-4S] cluster</name>
        <dbReference type="ChEBI" id="CHEBI:49883"/>
    </cofactor>
    <text evidence="1">Binds 2 [4Fe-4S] clusters. One cluster is coordinated with 3 cysteines and an exchangeable S-adenosyl-L-methionine.</text>
</comment>
<comment type="subunit">
    <text evidence="1">Monomer.</text>
</comment>
<comment type="subcellular location">
    <subcellularLocation>
        <location evidence="1">Cytoplasm</location>
    </subcellularLocation>
</comment>
<comment type="similarity">
    <text evidence="1">Belongs to the methylthiotransferase family. MiaB subfamily.</text>
</comment>
<protein>
    <recommendedName>
        <fullName evidence="1">tRNA-2-methylthio-N(6)-dimethylallyladenosine synthase</fullName>
        <ecNumber evidence="1">2.8.4.3</ecNumber>
    </recommendedName>
    <alternativeName>
        <fullName evidence="1">(Dimethylallyl)adenosine tRNA methylthiotransferase MiaB</fullName>
    </alternativeName>
    <alternativeName>
        <fullName evidence="1">tRNA-i(6)A37 methylthiotransferase</fullName>
    </alternativeName>
</protein>
<feature type="chain" id="PRO_0000374484" description="tRNA-2-methylthio-N(6)-dimethylallyladenosine synthase">
    <location>
        <begin position="1"/>
        <end position="473"/>
    </location>
</feature>
<feature type="domain" description="MTTase N-terminal" evidence="1">
    <location>
        <begin position="26"/>
        <end position="146"/>
    </location>
</feature>
<feature type="domain" description="Radical SAM core" evidence="2">
    <location>
        <begin position="173"/>
        <end position="405"/>
    </location>
</feature>
<feature type="domain" description="TRAM" evidence="1">
    <location>
        <begin position="408"/>
        <end position="470"/>
    </location>
</feature>
<feature type="region of interest" description="Disordered" evidence="3">
    <location>
        <begin position="1"/>
        <end position="21"/>
    </location>
</feature>
<feature type="binding site" evidence="1">
    <location>
        <position position="35"/>
    </location>
    <ligand>
        <name>[4Fe-4S] cluster</name>
        <dbReference type="ChEBI" id="CHEBI:49883"/>
        <label>1</label>
    </ligand>
</feature>
<feature type="binding site" evidence="1">
    <location>
        <position position="71"/>
    </location>
    <ligand>
        <name>[4Fe-4S] cluster</name>
        <dbReference type="ChEBI" id="CHEBI:49883"/>
        <label>1</label>
    </ligand>
</feature>
<feature type="binding site" evidence="1">
    <location>
        <position position="109"/>
    </location>
    <ligand>
        <name>[4Fe-4S] cluster</name>
        <dbReference type="ChEBI" id="CHEBI:49883"/>
        <label>1</label>
    </ligand>
</feature>
<feature type="binding site" evidence="1">
    <location>
        <position position="187"/>
    </location>
    <ligand>
        <name>[4Fe-4S] cluster</name>
        <dbReference type="ChEBI" id="CHEBI:49883"/>
        <label>2</label>
        <note>4Fe-4S-S-AdoMet</note>
    </ligand>
</feature>
<feature type="binding site" evidence="1">
    <location>
        <position position="191"/>
    </location>
    <ligand>
        <name>[4Fe-4S] cluster</name>
        <dbReference type="ChEBI" id="CHEBI:49883"/>
        <label>2</label>
        <note>4Fe-4S-S-AdoMet</note>
    </ligand>
</feature>
<feature type="binding site" evidence="1">
    <location>
        <position position="194"/>
    </location>
    <ligand>
        <name>[4Fe-4S] cluster</name>
        <dbReference type="ChEBI" id="CHEBI:49883"/>
        <label>2</label>
        <note>4Fe-4S-S-AdoMet</note>
    </ligand>
</feature>
<keyword id="KW-0004">4Fe-4S</keyword>
<keyword id="KW-0963">Cytoplasm</keyword>
<keyword id="KW-0408">Iron</keyword>
<keyword id="KW-0411">Iron-sulfur</keyword>
<keyword id="KW-0479">Metal-binding</keyword>
<keyword id="KW-0949">S-adenosyl-L-methionine</keyword>
<keyword id="KW-0808">Transferase</keyword>
<keyword id="KW-0819">tRNA processing</keyword>
<accession>Q1MMB6</accession>
<sequence>MTQDSALLQAPEAIPSESLRDGSNSRKVFIKTYGCQMNVYDSMRMSDALARDGYEPTEDMEVADLVLLNTCHIREKAAEKVYSALGRLREMKKKKAADGREMMIGVAGCVAQAEGEEILRRAPAVDVVIGPQTYHRLPEALRRAKQGQRVVDTEYAIEDKFEHLPIAESRRIRARGVTAFLTVQEGCDKFCTFCVVPYTRGSEVSRSVSQIVEEAEKLADSGVREITLLGQNVNAWHGAGSQGEAWSLGDLLYRLAEIPGLARLRYTTSHPRDMDDRLINAHRDLSALMPYLHLPVQSGSDRILKAMNRRHTAAEYLALIERIRTVRPDIALSGDFITGFPGETDEDFKDTLRLVEEVRYAQAFSFKYSTRPGTPGAELKDQVPEEIKAERLERLQMLLLKQQQEFAESCVGKEIDLLLEKPGRMPEQLIGRSPWLQSVNVDAKASQIGDIIKVRITGTGTNSLFAEHAEAAV</sequence>
<reference key="1">
    <citation type="journal article" date="2006" name="Genome Biol.">
        <title>The genome of Rhizobium leguminosarum has recognizable core and accessory components.</title>
        <authorList>
            <person name="Young J.P.W."/>
            <person name="Crossman L.C."/>
            <person name="Johnston A.W.B."/>
            <person name="Thomson N.R."/>
            <person name="Ghazoui Z.F."/>
            <person name="Hull K.H."/>
            <person name="Wexler M."/>
            <person name="Curson A.R.J."/>
            <person name="Todd J.D."/>
            <person name="Poole P.S."/>
            <person name="Mauchline T.H."/>
            <person name="East A.K."/>
            <person name="Quail M.A."/>
            <person name="Churcher C."/>
            <person name="Arrowsmith C."/>
            <person name="Cherevach I."/>
            <person name="Chillingworth T."/>
            <person name="Clarke K."/>
            <person name="Cronin A."/>
            <person name="Davis P."/>
            <person name="Fraser A."/>
            <person name="Hance Z."/>
            <person name="Hauser H."/>
            <person name="Jagels K."/>
            <person name="Moule S."/>
            <person name="Mungall K."/>
            <person name="Norbertczak H."/>
            <person name="Rabbinowitsch E."/>
            <person name="Sanders M."/>
            <person name="Simmonds M."/>
            <person name="Whitehead S."/>
            <person name="Parkhill J."/>
        </authorList>
    </citation>
    <scope>NUCLEOTIDE SEQUENCE [LARGE SCALE GENOMIC DNA]</scope>
    <source>
        <strain>DSM 114642 / LMG 32736 / 3841</strain>
    </source>
</reference>